<organism>
    <name type="scientific">Dictyostelium discoideum</name>
    <name type="common">Social amoeba</name>
    <dbReference type="NCBI Taxonomy" id="44689"/>
    <lineage>
        <taxon>Eukaryota</taxon>
        <taxon>Amoebozoa</taxon>
        <taxon>Evosea</taxon>
        <taxon>Eumycetozoa</taxon>
        <taxon>Dictyostelia</taxon>
        <taxon>Dictyosteliales</taxon>
        <taxon>Dictyosteliaceae</taxon>
        <taxon>Dictyostelium</taxon>
    </lineage>
</organism>
<sequence>MTTPILNSSVPGNIQKKSLEGTHIAISGLIGAGKTTLAVALGKVLNLPTYFEEVIDNLYLQDFYKDPKKYGFQLQIYLLNSRFQQQQQIIWQARGGVQDRTIYEDSVFAKMLNESGLLDDRDYNTYCKLFQNLSNFMRRPDLIIHLDVSPEKSLERIKLRNRDCEKDVSLEYLQNLYNAYHEFLQDISRYIPVIRINWSEFVDPEQLAQMIKAEYESMRFMNQINPPTFGNGPTTNKIISTPKDL</sequence>
<feature type="chain" id="PRO_0000327714" description="Deoxyadenosine kinase">
    <location>
        <begin position="1"/>
        <end position="245"/>
    </location>
</feature>
<feature type="active site" description="Proton acceptor" evidence="2">
    <location>
        <position position="99"/>
    </location>
</feature>
<feature type="binding site" evidence="1">
    <location>
        <begin position="28"/>
        <end position="36"/>
    </location>
    <ligand>
        <name>ATP</name>
        <dbReference type="ChEBI" id="CHEBI:30616"/>
    </ligand>
</feature>
<feature type="binding site" evidence="1">
    <location>
        <position position="52"/>
    </location>
    <ligand>
        <name>substrate</name>
    </ligand>
</feature>
<feature type="binding site" evidence="1">
    <location>
        <position position="64"/>
    </location>
    <ligand>
        <name>substrate</name>
    </ligand>
</feature>
<feature type="binding site" evidence="1">
    <location>
        <position position="75"/>
    </location>
    <ligand>
        <name>substrate</name>
    </ligand>
</feature>
<feature type="binding site" evidence="1">
    <location>
        <position position="100"/>
    </location>
    <ligand>
        <name>substrate</name>
    </ligand>
</feature>
<feature type="binding site" evidence="1">
    <location>
        <position position="105"/>
    </location>
    <ligand>
        <name>substrate</name>
    </ligand>
</feature>
<feature type="binding site" evidence="1">
    <location>
        <position position="165"/>
    </location>
    <ligand>
        <name>substrate</name>
    </ligand>
</feature>
<keyword id="KW-0067">ATP-binding</keyword>
<keyword id="KW-0418">Kinase</keyword>
<keyword id="KW-0547">Nucleotide-binding</keyword>
<keyword id="KW-1185">Reference proteome</keyword>
<keyword id="KW-0808">Transferase</keyword>
<gene>
    <name type="primary">dak</name>
    <name type="ORF">DDB_G0278191</name>
</gene>
<reference key="1">
    <citation type="journal article" date="2007" name="J. Mol. Biol.">
        <title>Dictyostelium discoideum salvages purine deoxyribonucleosides by highly specific bacterial-like deoxyribonucleoside kinases.</title>
        <authorList>
            <person name="Sandrini M.P.B."/>
            <person name="Soederbom F."/>
            <person name="Mikkelsen N.E."/>
            <person name="Piskur J."/>
        </authorList>
    </citation>
    <scope>NUCLEOTIDE SEQUENCE [MRNA]</scope>
    <scope>CATALYTIC ACTIVITY</scope>
    <scope>BIOPHYSICOCHEMICAL PROPERTIES</scope>
    <source>
        <strain>AX4</strain>
    </source>
</reference>
<reference key="2">
    <citation type="journal article" date="2005" name="Nature">
        <title>The genome of the social amoeba Dictyostelium discoideum.</title>
        <authorList>
            <person name="Eichinger L."/>
            <person name="Pachebat J.A."/>
            <person name="Gloeckner G."/>
            <person name="Rajandream M.A."/>
            <person name="Sucgang R."/>
            <person name="Berriman M."/>
            <person name="Song J."/>
            <person name="Olsen R."/>
            <person name="Szafranski K."/>
            <person name="Xu Q."/>
            <person name="Tunggal B."/>
            <person name="Kummerfeld S."/>
            <person name="Madera M."/>
            <person name="Konfortov B.A."/>
            <person name="Rivero F."/>
            <person name="Bankier A.T."/>
            <person name="Lehmann R."/>
            <person name="Hamlin N."/>
            <person name="Davies R."/>
            <person name="Gaudet P."/>
            <person name="Fey P."/>
            <person name="Pilcher K."/>
            <person name="Chen G."/>
            <person name="Saunders D."/>
            <person name="Sodergren E.J."/>
            <person name="Davis P."/>
            <person name="Kerhornou A."/>
            <person name="Nie X."/>
            <person name="Hall N."/>
            <person name="Anjard C."/>
            <person name="Hemphill L."/>
            <person name="Bason N."/>
            <person name="Farbrother P."/>
            <person name="Desany B."/>
            <person name="Just E."/>
            <person name="Morio T."/>
            <person name="Rost R."/>
            <person name="Churcher C.M."/>
            <person name="Cooper J."/>
            <person name="Haydock S."/>
            <person name="van Driessche N."/>
            <person name="Cronin A."/>
            <person name="Goodhead I."/>
            <person name="Muzny D.M."/>
            <person name="Mourier T."/>
            <person name="Pain A."/>
            <person name="Lu M."/>
            <person name="Harper D."/>
            <person name="Lindsay R."/>
            <person name="Hauser H."/>
            <person name="James K.D."/>
            <person name="Quiles M."/>
            <person name="Madan Babu M."/>
            <person name="Saito T."/>
            <person name="Buchrieser C."/>
            <person name="Wardroper A."/>
            <person name="Felder M."/>
            <person name="Thangavelu M."/>
            <person name="Johnson D."/>
            <person name="Knights A."/>
            <person name="Loulseged H."/>
            <person name="Mungall K.L."/>
            <person name="Oliver K."/>
            <person name="Price C."/>
            <person name="Quail M.A."/>
            <person name="Urushihara H."/>
            <person name="Hernandez J."/>
            <person name="Rabbinowitsch E."/>
            <person name="Steffen D."/>
            <person name="Sanders M."/>
            <person name="Ma J."/>
            <person name="Kohara Y."/>
            <person name="Sharp S."/>
            <person name="Simmonds M.N."/>
            <person name="Spiegler S."/>
            <person name="Tivey A."/>
            <person name="Sugano S."/>
            <person name="White B."/>
            <person name="Walker D."/>
            <person name="Woodward J.R."/>
            <person name="Winckler T."/>
            <person name="Tanaka Y."/>
            <person name="Shaulsky G."/>
            <person name="Schleicher M."/>
            <person name="Weinstock G.M."/>
            <person name="Rosenthal A."/>
            <person name="Cox E.C."/>
            <person name="Chisholm R.L."/>
            <person name="Gibbs R.A."/>
            <person name="Loomis W.F."/>
            <person name="Platzer M."/>
            <person name="Kay R.R."/>
            <person name="Williams J.G."/>
            <person name="Dear P.H."/>
            <person name="Noegel A.A."/>
            <person name="Barrell B.G."/>
            <person name="Kuspa A."/>
        </authorList>
    </citation>
    <scope>NUCLEOTIDE SEQUENCE [LARGE SCALE GENOMIC DNA]</scope>
    <source>
        <strain>AX4</strain>
    </source>
</reference>
<accession>Q54YL2</accession>
<accession>Q49UB1</accession>
<name>DAK_DICDI</name>
<protein>
    <recommendedName>
        <fullName>Deoxyadenosine kinase</fullName>
        <ecNumber>2.7.1.76</ecNumber>
    </recommendedName>
    <alternativeName>
        <fullName>DddDAK</fullName>
        <shortName>DAK</shortName>
    </alternativeName>
</protein>
<dbReference type="EC" id="2.7.1.76"/>
<dbReference type="EMBL" id="AY192983">
    <property type="protein sequence ID" value="AAO64433.1"/>
    <property type="molecule type" value="mRNA"/>
</dbReference>
<dbReference type="EMBL" id="AAFI02000023">
    <property type="protein sequence ID" value="EAL68268.1"/>
    <property type="molecule type" value="Genomic_DNA"/>
</dbReference>
<dbReference type="RefSeq" id="XP_642190.1">
    <property type="nucleotide sequence ID" value="XM_637098.1"/>
</dbReference>
<dbReference type="SMR" id="Q54YL2"/>
<dbReference type="FunCoup" id="Q54YL2">
    <property type="interactions" value="47"/>
</dbReference>
<dbReference type="STRING" id="44689.Q54YL2"/>
<dbReference type="PaxDb" id="44689-DDB0232027"/>
<dbReference type="EnsemblProtists" id="EAL68268">
    <property type="protein sequence ID" value="EAL68268"/>
    <property type="gene ID" value="DDB_G0278191"/>
</dbReference>
<dbReference type="GeneID" id="8621397"/>
<dbReference type="KEGG" id="ddi:DDB_G0278191"/>
<dbReference type="dictyBase" id="DDB_G0278191">
    <property type="gene designation" value="dak"/>
</dbReference>
<dbReference type="VEuPathDB" id="AmoebaDB:DDB_G0278191"/>
<dbReference type="eggNOG" id="KOG4235">
    <property type="taxonomic scope" value="Eukaryota"/>
</dbReference>
<dbReference type="HOGENOM" id="CLU_049131_0_1_1"/>
<dbReference type="InParanoid" id="Q54YL2"/>
<dbReference type="OMA" id="SFQLEMF"/>
<dbReference type="PhylomeDB" id="Q54YL2"/>
<dbReference type="SABIO-RK" id="Q54YL2"/>
<dbReference type="PRO" id="PR:Q54YL2"/>
<dbReference type="Proteomes" id="UP000002195">
    <property type="component" value="Chromosome 3"/>
</dbReference>
<dbReference type="GO" id="GO:0005737">
    <property type="term" value="C:cytoplasm"/>
    <property type="evidence" value="ECO:0000318"/>
    <property type="project" value="GO_Central"/>
</dbReference>
<dbReference type="GO" id="GO:0005739">
    <property type="term" value="C:mitochondrion"/>
    <property type="evidence" value="ECO:0000318"/>
    <property type="project" value="GO_Central"/>
</dbReference>
<dbReference type="GO" id="GO:0005524">
    <property type="term" value="F:ATP binding"/>
    <property type="evidence" value="ECO:0007669"/>
    <property type="project" value="UniProtKB-KW"/>
</dbReference>
<dbReference type="GO" id="GO:0004136">
    <property type="term" value="F:deoxyadenosine kinase activity"/>
    <property type="evidence" value="ECO:0000314"/>
    <property type="project" value="dictyBase"/>
</dbReference>
<dbReference type="GO" id="GO:0019136">
    <property type="term" value="F:deoxynucleoside kinase activity"/>
    <property type="evidence" value="ECO:0000318"/>
    <property type="project" value="GO_Central"/>
</dbReference>
<dbReference type="GO" id="GO:0006139">
    <property type="term" value="P:nucleobase-containing compound metabolic process"/>
    <property type="evidence" value="ECO:0000314"/>
    <property type="project" value="dictyBase"/>
</dbReference>
<dbReference type="CDD" id="cd01673">
    <property type="entry name" value="dNK"/>
    <property type="match status" value="1"/>
</dbReference>
<dbReference type="FunFam" id="3.40.50.300:FF:000659">
    <property type="entry name" value="Deoxyguanosine kinase"/>
    <property type="match status" value="1"/>
</dbReference>
<dbReference type="Gene3D" id="3.40.50.300">
    <property type="entry name" value="P-loop containing nucleotide triphosphate hydrolases"/>
    <property type="match status" value="1"/>
</dbReference>
<dbReference type="InterPro" id="IPR050566">
    <property type="entry name" value="Deoxyribonucleoside_kinase"/>
</dbReference>
<dbReference type="InterPro" id="IPR031314">
    <property type="entry name" value="DNK_dom"/>
</dbReference>
<dbReference type="InterPro" id="IPR027417">
    <property type="entry name" value="P-loop_NTPase"/>
</dbReference>
<dbReference type="PANTHER" id="PTHR10513:SF35">
    <property type="entry name" value="DEOXYADENOSINE KINASE"/>
    <property type="match status" value="1"/>
</dbReference>
<dbReference type="PANTHER" id="PTHR10513">
    <property type="entry name" value="DEOXYNUCLEOSIDE KINASE"/>
    <property type="match status" value="1"/>
</dbReference>
<dbReference type="Pfam" id="PF01712">
    <property type="entry name" value="dNK"/>
    <property type="match status" value="1"/>
</dbReference>
<dbReference type="SUPFAM" id="SSF52540">
    <property type="entry name" value="P-loop containing nucleoside triphosphate hydrolases"/>
    <property type="match status" value="1"/>
</dbReference>
<comment type="function">
    <text>Specific kinase that phosphorylates deoxyadenosine but not any other deoxyribonucleoside, as part of the deoxyribonucleotide salvage pathway.</text>
</comment>
<comment type="catalytic activity">
    <reaction evidence="3">
        <text>2'-deoxyadenosine + ATP = dAMP + ADP + H(+)</text>
        <dbReference type="Rhea" id="RHEA:23452"/>
        <dbReference type="ChEBI" id="CHEBI:15378"/>
        <dbReference type="ChEBI" id="CHEBI:17256"/>
        <dbReference type="ChEBI" id="CHEBI:30616"/>
        <dbReference type="ChEBI" id="CHEBI:58245"/>
        <dbReference type="ChEBI" id="CHEBI:456216"/>
        <dbReference type="EC" id="2.7.1.76"/>
    </reaction>
</comment>
<comment type="biophysicochemical properties">
    <kinetics>
        <KM evidence="3">4 uM for thymidine</KM>
        <KM evidence="3">22.7 uM for deoxyadenosine</KM>
        <KM evidence="3">146 uM for fludarabine</KM>
        <text>Catalytic efficiency is 100-fold higher for deoxyadenosine than for thymidine.</text>
    </kinetics>
</comment>
<comment type="miscellaneous">
    <text>Can also efficiently phosphorylate medically important adenosine analogs, such as 9-beta-d-arabinofuranosyl-2-fluoroadenine (fludarabine).</text>
</comment>
<comment type="similarity">
    <text evidence="4">Belongs to the DCK/DGK family.</text>
</comment>
<proteinExistence type="evidence at protein level"/>
<evidence type="ECO:0000250" key="1"/>
<evidence type="ECO:0000255" key="2"/>
<evidence type="ECO:0000269" key="3">
    <source>
    </source>
</evidence>
<evidence type="ECO:0000305" key="4"/>